<protein>
    <recommendedName>
        <fullName evidence="1">Uridylate kinase</fullName>
        <shortName evidence="1">UK</shortName>
        <ecNumber evidence="1">2.7.4.22</ecNumber>
    </recommendedName>
    <alternativeName>
        <fullName evidence="1">Uridine monophosphate kinase</fullName>
        <shortName evidence="1">UMP kinase</shortName>
        <shortName evidence="1">UMPK</shortName>
    </alternativeName>
</protein>
<comment type="function">
    <text evidence="3">Catalyzes the reversible phosphorylation of UMP to UDP.</text>
</comment>
<comment type="catalytic activity">
    <reaction evidence="1">
        <text>UMP + ATP = UDP + ADP</text>
        <dbReference type="Rhea" id="RHEA:24400"/>
        <dbReference type="ChEBI" id="CHEBI:30616"/>
        <dbReference type="ChEBI" id="CHEBI:57865"/>
        <dbReference type="ChEBI" id="CHEBI:58223"/>
        <dbReference type="ChEBI" id="CHEBI:456216"/>
        <dbReference type="EC" id="2.7.4.22"/>
    </reaction>
</comment>
<comment type="activity regulation">
    <text evidence="1">Allosterically activated by GTP. Inhibited by UTP.</text>
</comment>
<comment type="pathway">
    <text evidence="1">Pyrimidine metabolism; CTP biosynthesis via de novo pathway; UDP from UMP (UMPK route): step 1/1.</text>
</comment>
<comment type="subunit">
    <text evidence="1">Homohexamer.</text>
</comment>
<comment type="subcellular location">
    <subcellularLocation>
        <location evidence="1">Cytoplasm</location>
    </subcellularLocation>
</comment>
<comment type="similarity">
    <text evidence="1">Belongs to the UMP kinase family.</text>
</comment>
<dbReference type="EC" id="2.7.4.22" evidence="1"/>
<dbReference type="EMBL" id="AJ011960">
    <property type="protein sequence ID" value="CAB38122.1"/>
    <property type="molecule type" value="Genomic_DNA"/>
</dbReference>
<dbReference type="EMBL" id="AM406671">
    <property type="protein sequence ID" value="CAL98851.1"/>
    <property type="molecule type" value="Genomic_DNA"/>
</dbReference>
<dbReference type="RefSeq" id="WP_004254608.1">
    <property type="nucleotide sequence ID" value="NZ_WJVF01000005.1"/>
</dbReference>
<dbReference type="SMR" id="Q9Z5K8"/>
<dbReference type="STRING" id="416870.llmg_2285"/>
<dbReference type="GeneID" id="61110335"/>
<dbReference type="KEGG" id="llm:llmg_2285"/>
<dbReference type="eggNOG" id="COG0528">
    <property type="taxonomic scope" value="Bacteria"/>
</dbReference>
<dbReference type="HOGENOM" id="CLU_033861_0_0_9"/>
<dbReference type="OrthoDB" id="9807458at2"/>
<dbReference type="PhylomeDB" id="Q9Z5K8"/>
<dbReference type="UniPathway" id="UPA00159">
    <property type="reaction ID" value="UER00275"/>
</dbReference>
<dbReference type="Proteomes" id="UP000000364">
    <property type="component" value="Chromosome"/>
</dbReference>
<dbReference type="GO" id="GO:0005737">
    <property type="term" value="C:cytoplasm"/>
    <property type="evidence" value="ECO:0007669"/>
    <property type="project" value="UniProtKB-SubCell"/>
</dbReference>
<dbReference type="GO" id="GO:0005524">
    <property type="term" value="F:ATP binding"/>
    <property type="evidence" value="ECO:0007669"/>
    <property type="project" value="UniProtKB-KW"/>
</dbReference>
<dbReference type="GO" id="GO:0033862">
    <property type="term" value="F:UMP kinase activity"/>
    <property type="evidence" value="ECO:0007669"/>
    <property type="project" value="UniProtKB-EC"/>
</dbReference>
<dbReference type="GO" id="GO:0044210">
    <property type="term" value="P:'de novo' CTP biosynthetic process"/>
    <property type="evidence" value="ECO:0007669"/>
    <property type="project" value="UniProtKB-UniRule"/>
</dbReference>
<dbReference type="GO" id="GO:0006225">
    <property type="term" value="P:UDP biosynthetic process"/>
    <property type="evidence" value="ECO:0007669"/>
    <property type="project" value="TreeGrafter"/>
</dbReference>
<dbReference type="CDD" id="cd04254">
    <property type="entry name" value="AAK_UMPK-PyrH-Ec"/>
    <property type="match status" value="1"/>
</dbReference>
<dbReference type="FunFam" id="3.40.1160.10:FF:000001">
    <property type="entry name" value="Uridylate kinase"/>
    <property type="match status" value="1"/>
</dbReference>
<dbReference type="Gene3D" id="3.40.1160.10">
    <property type="entry name" value="Acetylglutamate kinase-like"/>
    <property type="match status" value="1"/>
</dbReference>
<dbReference type="HAMAP" id="MF_01220_B">
    <property type="entry name" value="PyrH_B"/>
    <property type="match status" value="1"/>
</dbReference>
<dbReference type="InterPro" id="IPR036393">
    <property type="entry name" value="AceGlu_kinase-like_sf"/>
</dbReference>
<dbReference type="InterPro" id="IPR001048">
    <property type="entry name" value="Asp/Glu/Uridylate_kinase"/>
</dbReference>
<dbReference type="InterPro" id="IPR011817">
    <property type="entry name" value="Uridylate_kinase"/>
</dbReference>
<dbReference type="InterPro" id="IPR015963">
    <property type="entry name" value="Uridylate_kinase_bac"/>
</dbReference>
<dbReference type="NCBIfam" id="TIGR02075">
    <property type="entry name" value="pyrH_bact"/>
    <property type="match status" value="1"/>
</dbReference>
<dbReference type="PANTHER" id="PTHR42833">
    <property type="entry name" value="URIDYLATE KINASE"/>
    <property type="match status" value="1"/>
</dbReference>
<dbReference type="PANTHER" id="PTHR42833:SF4">
    <property type="entry name" value="URIDYLATE KINASE PUMPKIN, CHLOROPLASTIC"/>
    <property type="match status" value="1"/>
</dbReference>
<dbReference type="Pfam" id="PF00696">
    <property type="entry name" value="AA_kinase"/>
    <property type="match status" value="1"/>
</dbReference>
<dbReference type="PIRSF" id="PIRSF005650">
    <property type="entry name" value="Uridylate_kin"/>
    <property type="match status" value="1"/>
</dbReference>
<dbReference type="SUPFAM" id="SSF53633">
    <property type="entry name" value="Carbamate kinase-like"/>
    <property type="match status" value="1"/>
</dbReference>
<keyword id="KW-0021">Allosteric enzyme</keyword>
<keyword id="KW-0067">ATP-binding</keyword>
<keyword id="KW-0963">Cytoplasm</keyword>
<keyword id="KW-0418">Kinase</keyword>
<keyword id="KW-0547">Nucleotide-binding</keyword>
<keyword id="KW-0665">Pyrimidine biosynthesis</keyword>
<keyword id="KW-0808">Transferase</keyword>
<sequence>MAEIKYKRVLLKLSGEALSGEKGFGFDPETAKAVAEELKEVHDLGAELAIVCGGGNVWRGVTGEKAGMERAQADYMGMLATIQNGLFIQSALENIGVDTRVMTAIEMKAVAEPYIRRRAERHLEKGRVVIFAGGTGSPYFSTDTTSALRAAEINADVILMAKNGVDGVYNADPKLVADAIKFEHLTHMDVITKGLQVMDSTASTMSMDNHIPLVVFNMNEAGNITRVVRGEEIGTTVE</sequence>
<proteinExistence type="inferred from homology"/>
<gene>
    <name evidence="1" type="primary">pyrH</name>
    <name type="ordered locus">llmg_2285</name>
</gene>
<evidence type="ECO:0000255" key="1">
    <source>
        <dbReference type="HAMAP-Rule" id="MF_01220"/>
    </source>
</evidence>
<evidence type="ECO:0000305" key="2"/>
<evidence type="ECO:0000305" key="3">
    <source>
    </source>
</evidence>
<name>PYRH_LACLM</name>
<accession>Q9Z5K8</accession>
<accession>A2RNG2</accession>
<feature type="chain" id="PRO_0000143853" description="Uridylate kinase">
    <location>
        <begin position="1"/>
        <end position="238"/>
    </location>
</feature>
<feature type="region of interest" description="Involved in allosteric activation by GTP" evidence="1">
    <location>
        <begin position="20"/>
        <end position="25"/>
    </location>
</feature>
<feature type="binding site" evidence="1">
    <location>
        <begin position="12"/>
        <end position="15"/>
    </location>
    <ligand>
        <name>ATP</name>
        <dbReference type="ChEBI" id="CHEBI:30616"/>
    </ligand>
</feature>
<feature type="binding site" evidence="1">
    <location>
        <position position="54"/>
    </location>
    <ligand>
        <name>UMP</name>
        <dbReference type="ChEBI" id="CHEBI:57865"/>
    </ligand>
</feature>
<feature type="binding site" evidence="1">
    <location>
        <position position="55"/>
    </location>
    <ligand>
        <name>ATP</name>
        <dbReference type="ChEBI" id="CHEBI:30616"/>
    </ligand>
</feature>
<feature type="binding site" evidence="1">
    <location>
        <position position="59"/>
    </location>
    <ligand>
        <name>ATP</name>
        <dbReference type="ChEBI" id="CHEBI:30616"/>
    </ligand>
</feature>
<feature type="binding site" evidence="1">
    <location>
        <position position="74"/>
    </location>
    <ligand>
        <name>UMP</name>
        <dbReference type="ChEBI" id="CHEBI:57865"/>
    </ligand>
</feature>
<feature type="binding site" evidence="1">
    <location>
        <begin position="135"/>
        <end position="142"/>
    </location>
    <ligand>
        <name>UMP</name>
        <dbReference type="ChEBI" id="CHEBI:57865"/>
    </ligand>
</feature>
<feature type="binding site" evidence="1">
    <location>
        <position position="163"/>
    </location>
    <ligand>
        <name>ATP</name>
        <dbReference type="ChEBI" id="CHEBI:30616"/>
    </ligand>
</feature>
<feature type="binding site" evidence="1">
    <location>
        <position position="169"/>
    </location>
    <ligand>
        <name>ATP</name>
        <dbReference type="ChEBI" id="CHEBI:30616"/>
    </ligand>
</feature>
<feature type="binding site" evidence="1">
    <location>
        <position position="172"/>
    </location>
    <ligand>
        <name>ATP</name>
        <dbReference type="ChEBI" id="CHEBI:30616"/>
    </ligand>
</feature>
<feature type="sequence conflict" description="In Ref. 1; CAB38122." evidence="2" ref="1">
    <original>RGVTGE</original>
    <variation>PWSYWST</variation>
    <location>
        <begin position="59"/>
        <end position="64"/>
    </location>
</feature>
<feature type="sequence conflict" description="In Ref. 1; CAB38122." evidence="2" ref="1">
    <original>DTT</original>
    <variation>IQP</variation>
    <location>
        <begin position="143"/>
        <end position="145"/>
    </location>
</feature>
<feature type="sequence conflict" description="In Ref. 1; CAB38122." evidence="2" ref="1">
    <original>A</original>
    <variation>T</variation>
    <location>
        <position position="155"/>
    </location>
</feature>
<feature type="sequence conflict" description="In Ref. 1; CAB38122." evidence="2" ref="1">
    <original>R</original>
    <variation>A</variation>
    <location>
        <position position="226"/>
    </location>
</feature>
<organism>
    <name type="scientific">Lactococcus lactis subsp. cremoris (strain MG1363)</name>
    <dbReference type="NCBI Taxonomy" id="416870"/>
    <lineage>
        <taxon>Bacteria</taxon>
        <taxon>Bacillati</taxon>
        <taxon>Bacillota</taxon>
        <taxon>Bacilli</taxon>
        <taxon>Lactobacillales</taxon>
        <taxon>Streptococcaceae</taxon>
        <taxon>Lactococcus</taxon>
        <taxon>Lactococcus cremoris subsp. cremoris</taxon>
    </lineage>
</organism>
<reference key="1">
    <citation type="journal article" date="2000" name="Gene">
        <title>The pyrH gene of Lactococcus lactis subsp. cremoris encoding UMP kinase is transcribed as part of an operon including the frr1 gene encoding ribosomal recycling factor 1.</title>
        <authorList>
            <person name="Wadskov-Hansen S.L.L."/>
            <person name="Martinussen J."/>
            <person name="Hammer K."/>
        </authorList>
    </citation>
    <scope>NUCLEOTIDE SEQUENCE [GENOMIC DNA]</scope>
    <scope>FUNCTION</scope>
</reference>
<reference key="2">
    <citation type="journal article" date="2007" name="J. Bacteriol.">
        <title>The complete genome sequence of the lactic acid bacterial paradigm Lactococcus lactis subsp. cremoris MG1363.</title>
        <authorList>
            <person name="Wegmann U."/>
            <person name="O'Connell-Motherway M."/>
            <person name="Zomer A."/>
            <person name="Buist G."/>
            <person name="Shearman C."/>
            <person name="Canchaya C."/>
            <person name="Ventura M."/>
            <person name="Goesmann A."/>
            <person name="Gasson M.J."/>
            <person name="Kuipers O.P."/>
            <person name="van Sinderen D."/>
            <person name="Kok J."/>
        </authorList>
    </citation>
    <scope>NUCLEOTIDE SEQUENCE [LARGE SCALE GENOMIC DNA]</scope>
    <source>
        <strain>MG1363</strain>
    </source>
</reference>